<name>Y501_MYCPN</name>
<protein>
    <recommendedName>
        <fullName>UPF0134 protein MPN_501</fullName>
    </recommendedName>
</protein>
<comment type="similarity">
    <text evidence="1">Belongs to the UPF0134 family.</text>
</comment>
<evidence type="ECO:0000305" key="1"/>
<keyword id="KW-1185">Reference proteome</keyword>
<dbReference type="EMBL" id="U00089">
    <property type="protein sequence ID" value="AAB95989.1"/>
    <property type="molecule type" value="Genomic_DNA"/>
</dbReference>
<dbReference type="PIR" id="S73668">
    <property type="entry name" value="S73668"/>
</dbReference>
<dbReference type="RefSeq" id="NP_110189.1">
    <property type="nucleotide sequence ID" value="NC_000912.1"/>
</dbReference>
<dbReference type="RefSeq" id="WP_010874857.1">
    <property type="nucleotide sequence ID" value="NZ_OU342337.1"/>
</dbReference>
<dbReference type="SMR" id="P75286"/>
<dbReference type="STRING" id="272634.MPN_501"/>
<dbReference type="EnsemblBacteria" id="AAB95989">
    <property type="protein sequence ID" value="AAB95989"/>
    <property type="gene ID" value="MPN_501"/>
</dbReference>
<dbReference type="KEGG" id="mpn:MPN_501"/>
<dbReference type="PATRIC" id="fig|272634.6.peg.547"/>
<dbReference type="HOGENOM" id="CLU_137918_0_0_14"/>
<dbReference type="BioCyc" id="MPNE272634:G1GJ3-821-MONOMER"/>
<dbReference type="Proteomes" id="UP000000808">
    <property type="component" value="Chromosome"/>
</dbReference>
<dbReference type="Gene3D" id="6.10.250.40">
    <property type="match status" value="2"/>
</dbReference>
<dbReference type="InterPro" id="IPR002862">
    <property type="entry name" value="DUF16"/>
</dbReference>
<dbReference type="Pfam" id="PF01519">
    <property type="entry name" value="DUF16"/>
    <property type="match status" value="2"/>
</dbReference>
<dbReference type="SUPFAM" id="SSF144266">
    <property type="entry name" value="MPN010-like"/>
    <property type="match status" value="2"/>
</dbReference>
<sequence length="196" mass="23165">MKEKIPFYNEKEFHDMVKKTKKGTFSGWYIIDKDNNSVEFSGKFNRQFKLNKPVIPVNTEYVTRKEFNEYKNSNDQRLTKIETTLAAQGEQINKLTQTVEKQGEQINQLVQVVLLHGEQINKLTQTVEKQGEQIKELQIEQKAQGETLKLILQTLQKMSDRLDKMEVKMDKMEVKMDKMEVKMDKMEKRIDKLESK</sequence>
<accession>P75286</accession>
<reference key="1">
    <citation type="journal article" date="1996" name="Nucleic Acids Res.">
        <title>Complete sequence analysis of the genome of the bacterium Mycoplasma pneumoniae.</title>
        <authorList>
            <person name="Himmelreich R."/>
            <person name="Hilbert H."/>
            <person name="Plagens H."/>
            <person name="Pirkl E."/>
            <person name="Li B.-C."/>
            <person name="Herrmann R."/>
        </authorList>
    </citation>
    <scope>NUCLEOTIDE SEQUENCE [LARGE SCALE GENOMIC DNA]</scope>
    <source>
        <strain>ATCC 29342 / M129 / Subtype 1</strain>
    </source>
</reference>
<proteinExistence type="inferred from homology"/>
<organism>
    <name type="scientific">Mycoplasma pneumoniae (strain ATCC 29342 / M129 / Subtype 1)</name>
    <name type="common">Mycoplasmoides pneumoniae</name>
    <dbReference type="NCBI Taxonomy" id="272634"/>
    <lineage>
        <taxon>Bacteria</taxon>
        <taxon>Bacillati</taxon>
        <taxon>Mycoplasmatota</taxon>
        <taxon>Mycoplasmoidales</taxon>
        <taxon>Mycoplasmoidaceae</taxon>
        <taxon>Mycoplasmoides</taxon>
    </lineage>
</organism>
<gene>
    <name type="ordered locus">MPN_501</name>
    <name type="ORF">MP342</name>
    <name type="ORF">P02_orf196</name>
</gene>
<feature type="chain" id="PRO_0000221610" description="UPF0134 protein MPN_501">
    <location>
        <begin position="1"/>
        <end position="196"/>
    </location>
</feature>